<name>CAPP_THES7</name>
<gene>
    <name type="primary">ppc</name>
</gene>
<keyword id="KW-0120">Carbon dioxide fixation</keyword>
<keyword id="KW-0903">Direct protein sequencing</keyword>
<keyword id="KW-0456">Lyase</keyword>
<keyword id="KW-0460">Magnesium</keyword>
<organism>
    <name type="scientific">Thermus sp. (strain 71)</name>
    <dbReference type="NCBI Taxonomy" id="72595"/>
    <lineage>
        <taxon>Bacteria</taxon>
        <taxon>Thermotogati</taxon>
        <taxon>Deinococcota</taxon>
        <taxon>Deinococci</taxon>
        <taxon>Thermales</taxon>
        <taxon>Thermaceae</taxon>
        <taxon>Thermus</taxon>
    </lineage>
</organism>
<accession>P51060</accession>
<evidence type="ECO:0000250" key="1"/>
<evidence type="ECO:0000305" key="2"/>
<proteinExistence type="evidence at protein level"/>
<comment type="function">
    <text>Forms oxaloacetate, a four-carbon dicarboxylic acid source for the tricarboxylic acid cycle.</text>
</comment>
<comment type="catalytic activity">
    <reaction>
        <text>oxaloacetate + phosphate = phosphoenolpyruvate + hydrogencarbonate</text>
        <dbReference type="Rhea" id="RHEA:28370"/>
        <dbReference type="ChEBI" id="CHEBI:16452"/>
        <dbReference type="ChEBI" id="CHEBI:17544"/>
        <dbReference type="ChEBI" id="CHEBI:43474"/>
        <dbReference type="ChEBI" id="CHEBI:58702"/>
        <dbReference type="EC" id="4.1.1.31"/>
    </reaction>
</comment>
<comment type="cofactor">
    <cofactor evidence="1">
        <name>Mg(2+)</name>
        <dbReference type="ChEBI" id="CHEBI:18420"/>
    </cofactor>
</comment>
<comment type="biophysicochemical properties">
    <temperatureDependence>
        <text>Thermostable. Retains almost full activity after 10 minutes at 65 degrees Celsius.</text>
    </temperatureDependence>
</comment>
<comment type="subunit">
    <text>Homotetramer.</text>
</comment>
<comment type="PTM">
    <text>The N-terminus is blocked.</text>
</comment>
<comment type="similarity">
    <text evidence="2">Belongs to the PEPCase type 1 family.</text>
</comment>
<dbReference type="EC" id="4.1.1.31"/>
<dbReference type="EMBL" id="D42166">
    <property type="protein sequence ID" value="BAA07723.1"/>
    <property type="molecule type" value="Genomic_DNA"/>
</dbReference>
<dbReference type="SMR" id="P51060"/>
<dbReference type="GO" id="GO:0005829">
    <property type="term" value="C:cytosol"/>
    <property type="evidence" value="ECO:0007669"/>
    <property type="project" value="TreeGrafter"/>
</dbReference>
<dbReference type="GO" id="GO:0000287">
    <property type="term" value="F:magnesium ion binding"/>
    <property type="evidence" value="ECO:0007669"/>
    <property type="project" value="UniProtKB-UniRule"/>
</dbReference>
<dbReference type="GO" id="GO:0008964">
    <property type="term" value="F:phosphoenolpyruvate carboxylase activity"/>
    <property type="evidence" value="ECO:0007669"/>
    <property type="project" value="UniProtKB-UniRule"/>
</dbReference>
<dbReference type="GO" id="GO:0015977">
    <property type="term" value="P:carbon fixation"/>
    <property type="evidence" value="ECO:0007669"/>
    <property type="project" value="UniProtKB-UniRule"/>
</dbReference>
<dbReference type="GO" id="GO:0006107">
    <property type="term" value="P:oxaloacetate metabolic process"/>
    <property type="evidence" value="ECO:0007669"/>
    <property type="project" value="UniProtKB-UniRule"/>
</dbReference>
<dbReference type="GO" id="GO:0006099">
    <property type="term" value="P:tricarboxylic acid cycle"/>
    <property type="evidence" value="ECO:0007669"/>
    <property type="project" value="InterPro"/>
</dbReference>
<dbReference type="HAMAP" id="MF_00595">
    <property type="entry name" value="PEPcase_type1"/>
    <property type="match status" value="1"/>
</dbReference>
<dbReference type="InterPro" id="IPR021135">
    <property type="entry name" value="PEP_COase"/>
</dbReference>
<dbReference type="InterPro" id="IPR022805">
    <property type="entry name" value="PEP_COase_bac/pln-type"/>
</dbReference>
<dbReference type="InterPro" id="IPR018129">
    <property type="entry name" value="PEP_COase_Lys_AS"/>
</dbReference>
<dbReference type="InterPro" id="IPR033129">
    <property type="entry name" value="PEPCASE_His_AS"/>
</dbReference>
<dbReference type="InterPro" id="IPR015813">
    <property type="entry name" value="Pyrv/PenolPyrv_kinase-like_dom"/>
</dbReference>
<dbReference type="PANTHER" id="PTHR30523">
    <property type="entry name" value="PHOSPHOENOLPYRUVATE CARBOXYLASE"/>
    <property type="match status" value="1"/>
</dbReference>
<dbReference type="PANTHER" id="PTHR30523:SF6">
    <property type="entry name" value="PHOSPHOENOLPYRUVATE CARBOXYLASE"/>
    <property type="match status" value="1"/>
</dbReference>
<dbReference type="Pfam" id="PF00311">
    <property type="entry name" value="PEPcase"/>
    <property type="match status" value="1"/>
</dbReference>
<dbReference type="PRINTS" id="PR00150">
    <property type="entry name" value="PEPCARBXLASE"/>
</dbReference>
<dbReference type="SUPFAM" id="SSF51621">
    <property type="entry name" value="Phosphoenolpyruvate/pyruvate domain"/>
    <property type="match status" value="1"/>
</dbReference>
<dbReference type="PROSITE" id="PS00781">
    <property type="entry name" value="PEPCASE_1"/>
    <property type="match status" value="1"/>
</dbReference>
<dbReference type="PROSITE" id="PS00393">
    <property type="entry name" value="PEPCASE_2"/>
    <property type="match status" value="1"/>
</dbReference>
<reference key="1">
    <citation type="journal article" date="1995" name="J. Biochem.">
        <title>Cloning and sequence analysis of the gene for phosphoenolpyruvate carboxylase from an extreme thermophile, Thermus sp.</title>
        <authorList>
            <person name="Nakamura T."/>
            <person name="Yoshioka I."/>
            <person name="Takahashi M."/>
            <person name="Izui K."/>
        </authorList>
    </citation>
    <scope>NUCLEOTIDE SEQUENCE [GENOMIC DNA]</scope>
    <scope>PARTIAL PROTEIN SEQUENCE</scope>
</reference>
<sequence>MSDPFEALKAEVDLLGRLLGEAIRKVSGERFFALVEEVRLLSKARRQGDGAAAEVLSQRVERMPVEEMEALVRAFTHYFHLVNLAEERHRVRVNRLRTEGETLENPRPEGFLALAKALKERGLSLEEAEAHLNRLALLLTFTAHPTETRRRTLRHHLERLQEELEGGDRERLLARVVLLYATEEVRKARPSVEDEIKGGLYYLPTTLWRAIPKVVEGLEAALERVYGKRPHLRSPVRFRSWMGGDRDGNPYVTPEVTAFAGRYAREVAKGRYLEELEALVRDLSLSEARIPVPKEVREGGEGVERFPGEPYRRYFAALYRALEGEALSTEGLARALKVAEKGLEGVGLAQVAQAFLRPLEARLSAFGLELAPLDLREESGKLLEAAAELLRLGGVHPDFLALSPEEKEALLTEELKTARPLLPVGEVPQGEALRVALGALRAWGDKGAHVVSMTHHPADLLAVFLLAREVGLYRPGKPLPFDVVPLFETLEDLERAPEVLRRLLANPVFRAHAQGRGGVEVMIGYSDSNKDAGFLMANLALYQAQEALHAVGEAQGIPVFFFHGRGTSTARGGGPAGRAIAGLPPKSVGHRLRLTEQGEALADRYAHPDLAVRHLEQLLYHFAQAALGDGVEPKAHWREALGEAGERSMARYRALLSQEGFFPFFEAFTPIREIGELPIASRPVYRHGRVRDIRDLRAIPWVMAWTQVRLLLPGWYGLSALEGLPMPLLREMYREWPFFATTLESAAMALAKADLGIAERYLKLVPEGLQGFYHHLAEEYRRTVALLEAIFEAPLLHNQKTLERQIALRNPYVDPINFVQVELLARYRAPGGREDEGVRRALLLSLLGVAAGLRNAG</sequence>
<protein>
    <recommendedName>
        <fullName>Phosphoenolpyruvate carboxylase</fullName>
        <shortName>PEPC</shortName>
        <shortName>PEPCase</shortName>
        <ecNumber>4.1.1.31</ecNumber>
    </recommendedName>
</protein>
<feature type="chain" id="PRO_0000166643" description="Phosphoenolpyruvate carboxylase">
    <location>
        <begin position="1"/>
        <end position="857"/>
    </location>
</feature>
<feature type="active site" evidence="1">
    <location>
        <position position="144"/>
    </location>
</feature>
<feature type="active site" evidence="1">
    <location>
        <position position="530"/>
    </location>
</feature>